<keyword id="KW-0119">Carbohydrate metabolism</keyword>
<keyword id="KW-0413">Isomerase</keyword>
<keyword id="KW-0521">NADP</keyword>
<keyword id="KW-1185">Reference proteome</keyword>
<feature type="chain" id="PRO_1000069365" description="ADP-L-glycero-D-manno-heptose-6-epimerase">
    <location>
        <begin position="1"/>
        <end position="331"/>
    </location>
</feature>
<feature type="active site" description="Proton acceptor" evidence="1">
    <location>
        <position position="139"/>
    </location>
</feature>
<feature type="active site" description="Proton acceptor" evidence="1">
    <location>
        <position position="177"/>
    </location>
</feature>
<feature type="binding site" evidence="1">
    <location>
        <begin position="11"/>
        <end position="12"/>
    </location>
    <ligand>
        <name>NADP(+)</name>
        <dbReference type="ChEBI" id="CHEBI:58349"/>
    </ligand>
</feature>
<feature type="binding site" evidence="1">
    <location>
        <begin position="32"/>
        <end position="33"/>
    </location>
    <ligand>
        <name>NADP(+)</name>
        <dbReference type="ChEBI" id="CHEBI:58349"/>
    </ligand>
</feature>
<feature type="binding site" evidence="1">
    <location>
        <position position="39"/>
    </location>
    <ligand>
        <name>NADP(+)</name>
        <dbReference type="ChEBI" id="CHEBI:58349"/>
    </ligand>
</feature>
<feature type="binding site" evidence="1">
    <location>
        <position position="54"/>
    </location>
    <ligand>
        <name>NADP(+)</name>
        <dbReference type="ChEBI" id="CHEBI:58349"/>
    </ligand>
</feature>
<feature type="binding site" evidence="1">
    <location>
        <begin position="75"/>
        <end position="79"/>
    </location>
    <ligand>
        <name>NADP(+)</name>
        <dbReference type="ChEBI" id="CHEBI:58349"/>
    </ligand>
</feature>
<feature type="binding site" evidence="1">
    <location>
        <position position="92"/>
    </location>
    <ligand>
        <name>NADP(+)</name>
        <dbReference type="ChEBI" id="CHEBI:58349"/>
    </ligand>
</feature>
<feature type="binding site" evidence="1">
    <location>
        <position position="143"/>
    </location>
    <ligand>
        <name>NADP(+)</name>
        <dbReference type="ChEBI" id="CHEBI:58349"/>
    </ligand>
</feature>
<feature type="binding site" evidence="1">
    <location>
        <position position="168"/>
    </location>
    <ligand>
        <name>substrate</name>
    </ligand>
</feature>
<feature type="binding site" evidence="1">
    <location>
        <position position="169"/>
    </location>
    <ligand>
        <name>NADP(+)</name>
        <dbReference type="ChEBI" id="CHEBI:58349"/>
    </ligand>
</feature>
<feature type="binding site" evidence="1">
    <location>
        <position position="177"/>
    </location>
    <ligand>
        <name>NADP(+)</name>
        <dbReference type="ChEBI" id="CHEBI:58349"/>
    </ligand>
</feature>
<feature type="binding site" evidence="1">
    <location>
        <position position="179"/>
    </location>
    <ligand>
        <name>substrate</name>
    </ligand>
</feature>
<feature type="binding site" evidence="1">
    <location>
        <position position="186"/>
    </location>
    <ligand>
        <name>substrate</name>
    </ligand>
</feature>
<feature type="binding site" evidence="1">
    <location>
        <begin position="200"/>
        <end position="203"/>
    </location>
    <ligand>
        <name>substrate</name>
    </ligand>
</feature>
<feature type="binding site" evidence="1">
    <location>
        <position position="213"/>
    </location>
    <ligand>
        <name>substrate</name>
    </ligand>
</feature>
<feature type="binding site" evidence="1">
    <location>
        <position position="292"/>
    </location>
    <ligand>
        <name>substrate</name>
    </ligand>
</feature>
<dbReference type="EC" id="5.1.3.20" evidence="1"/>
<dbReference type="EMBL" id="AM260479">
    <property type="protein sequence ID" value="CAJ91951.1"/>
    <property type="molecule type" value="Genomic_DNA"/>
</dbReference>
<dbReference type="SMR" id="Q0KDH0"/>
<dbReference type="STRING" id="381666.H16_A0804"/>
<dbReference type="KEGG" id="reh:H16_A0804"/>
<dbReference type="eggNOG" id="COG0451">
    <property type="taxonomic scope" value="Bacteria"/>
</dbReference>
<dbReference type="HOGENOM" id="CLU_007383_1_3_4"/>
<dbReference type="OrthoDB" id="9803010at2"/>
<dbReference type="UniPathway" id="UPA00356">
    <property type="reaction ID" value="UER00440"/>
</dbReference>
<dbReference type="Proteomes" id="UP000008210">
    <property type="component" value="Chromosome 1"/>
</dbReference>
<dbReference type="GO" id="GO:0008712">
    <property type="term" value="F:ADP-glyceromanno-heptose 6-epimerase activity"/>
    <property type="evidence" value="ECO:0007669"/>
    <property type="project" value="UniProtKB-UniRule"/>
</dbReference>
<dbReference type="GO" id="GO:0050661">
    <property type="term" value="F:NADP binding"/>
    <property type="evidence" value="ECO:0007669"/>
    <property type="project" value="InterPro"/>
</dbReference>
<dbReference type="GO" id="GO:0097171">
    <property type="term" value="P:ADP-L-glycero-beta-D-manno-heptose biosynthetic process"/>
    <property type="evidence" value="ECO:0007669"/>
    <property type="project" value="UniProtKB-UniPathway"/>
</dbReference>
<dbReference type="GO" id="GO:0005975">
    <property type="term" value="P:carbohydrate metabolic process"/>
    <property type="evidence" value="ECO:0007669"/>
    <property type="project" value="UniProtKB-UniRule"/>
</dbReference>
<dbReference type="CDD" id="cd05248">
    <property type="entry name" value="ADP_GME_SDR_e"/>
    <property type="match status" value="1"/>
</dbReference>
<dbReference type="Gene3D" id="3.40.50.720">
    <property type="entry name" value="NAD(P)-binding Rossmann-like Domain"/>
    <property type="match status" value="1"/>
</dbReference>
<dbReference type="Gene3D" id="3.90.25.10">
    <property type="entry name" value="UDP-galactose 4-epimerase, domain 1"/>
    <property type="match status" value="1"/>
</dbReference>
<dbReference type="HAMAP" id="MF_01601">
    <property type="entry name" value="Heptose_epimerase"/>
    <property type="match status" value="1"/>
</dbReference>
<dbReference type="InterPro" id="IPR001509">
    <property type="entry name" value="Epimerase_deHydtase"/>
</dbReference>
<dbReference type="InterPro" id="IPR011912">
    <property type="entry name" value="Heptose_epim"/>
</dbReference>
<dbReference type="InterPro" id="IPR036291">
    <property type="entry name" value="NAD(P)-bd_dom_sf"/>
</dbReference>
<dbReference type="NCBIfam" id="TIGR02197">
    <property type="entry name" value="heptose_epim"/>
    <property type="match status" value="1"/>
</dbReference>
<dbReference type="PANTHER" id="PTHR43103:SF3">
    <property type="entry name" value="ADP-L-GLYCERO-D-MANNO-HEPTOSE-6-EPIMERASE"/>
    <property type="match status" value="1"/>
</dbReference>
<dbReference type="PANTHER" id="PTHR43103">
    <property type="entry name" value="NUCLEOSIDE-DIPHOSPHATE-SUGAR EPIMERASE"/>
    <property type="match status" value="1"/>
</dbReference>
<dbReference type="Pfam" id="PF01370">
    <property type="entry name" value="Epimerase"/>
    <property type="match status" value="1"/>
</dbReference>
<dbReference type="SUPFAM" id="SSF51735">
    <property type="entry name" value="NAD(P)-binding Rossmann-fold domains"/>
    <property type="match status" value="1"/>
</dbReference>
<name>HLDD_CUPNH</name>
<sequence>MTIIVTGAAGFIGSNLVKGLNDRGETNVIAVDNLTRADKFHNLVDCEISDYLDKQDFLARFARGEFGKVRAVFHEGACSDTMETDGRYMMENNYRYTLSLMESCLEQGTQFLYASSAATYGASQVFREDREFERPLNVYGYSKFLFDQIVRRRLPSALSQIVGFRYFNVYGPRETHKGRMASVAFHNFNQFRADGTVKLFGEYGGYAPGMQSRDFISVEDVVKVNLHFFDHPDKSGIFNLGTGRAQPFNDIAATVVNTLREAEGKPRLSLDELVQEGLLEYVKFPDALRGKYQCFTQSDVSKLRSAGYSEPFLSVEEGVARYCRWLIERAG</sequence>
<organism>
    <name type="scientific">Cupriavidus necator (strain ATCC 17699 / DSM 428 / KCTC 22496 / NCIMB 10442 / H16 / Stanier 337)</name>
    <name type="common">Ralstonia eutropha</name>
    <dbReference type="NCBI Taxonomy" id="381666"/>
    <lineage>
        <taxon>Bacteria</taxon>
        <taxon>Pseudomonadati</taxon>
        <taxon>Pseudomonadota</taxon>
        <taxon>Betaproteobacteria</taxon>
        <taxon>Burkholderiales</taxon>
        <taxon>Burkholderiaceae</taxon>
        <taxon>Cupriavidus</taxon>
    </lineage>
</organism>
<proteinExistence type="inferred from homology"/>
<reference key="1">
    <citation type="journal article" date="2006" name="Nat. Biotechnol.">
        <title>Genome sequence of the bioplastic-producing 'Knallgas' bacterium Ralstonia eutropha H16.</title>
        <authorList>
            <person name="Pohlmann A."/>
            <person name="Fricke W.F."/>
            <person name="Reinecke F."/>
            <person name="Kusian B."/>
            <person name="Liesegang H."/>
            <person name="Cramm R."/>
            <person name="Eitinger T."/>
            <person name="Ewering C."/>
            <person name="Poetter M."/>
            <person name="Schwartz E."/>
            <person name="Strittmatter A."/>
            <person name="Voss I."/>
            <person name="Gottschalk G."/>
            <person name="Steinbuechel A."/>
            <person name="Friedrich B."/>
            <person name="Bowien B."/>
        </authorList>
    </citation>
    <scope>NUCLEOTIDE SEQUENCE [LARGE SCALE GENOMIC DNA]</scope>
    <source>
        <strain>ATCC 17699 / DSM 428 / KCTC 22496 / NCIMB 10442 / H16 / Stanier 337</strain>
    </source>
</reference>
<comment type="function">
    <text evidence="1">Catalyzes the interconversion between ADP-D-glycero-beta-D-manno-heptose and ADP-L-glycero-beta-D-manno-heptose via an epimerization at carbon 6 of the heptose.</text>
</comment>
<comment type="catalytic activity">
    <reaction evidence="1">
        <text>ADP-D-glycero-beta-D-manno-heptose = ADP-L-glycero-beta-D-manno-heptose</text>
        <dbReference type="Rhea" id="RHEA:17577"/>
        <dbReference type="ChEBI" id="CHEBI:59967"/>
        <dbReference type="ChEBI" id="CHEBI:61506"/>
        <dbReference type="EC" id="5.1.3.20"/>
    </reaction>
</comment>
<comment type="cofactor">
    <cofactor evidence="1">
        <name>NADP(+)</name>
        <dbReference type="ChEBI" id="CHEBI:58349"/>
    </cofactor>
    <text evidence="1">Binds 1 NADP(+) per subunit.</text>
</comment>
<comment type="pathway">
    <text evidence="1">Nucleotide-sugar biosynthesis; ADP-L-glycero-beta-D-manno-heptose biosynthesis; ADP-L-glycero-beta-D-manno-heptose from D-glycero-beta-D-manno-heptose 7-phosphate: step 4/4.</text>
</comment>
<comment type="subunit">
    <text evidence="1">Homopentamer.</text>
</comment>
<comment type="domain">
    <text evidence="1">Contains a large N-terminal NADP-binding domain, and a smaller C-terminal substrate-binding domain.</text>
</comment>
<comment type="similarity">
    <text evidence="1">Belongs to the NAD(P)-dependent epimerase/dehydratase family. HldD subfamily.</text>
</comment>
<accession>Q0KDH0</accession>
<protein>
    <recommendedName>
        <fullName evidence="1">ADP-L-glycero-D-manno-heptose-6-epimerase</fullName>
        <ecNumber evidence="1">5.1.3.20</ecNumber>
    </recommendedName>
    <alternativeName>
        <fullName evidence="1">ADP-L-glycero-beta-D-manno-heptose-6-epimerase</fullName>
        <shortName evidence="1">ADP-glyceromanno-heptose 6-epimerase</shortName>
        <shortName evidence="1">ADP-hep 6-epimerase</shortName>
        <shortName evidence="1">AGME</shortName>
    </alternativeName>
</protein>
<gene>
    <name evidence="1" type="primary">hldD</name>
    <name type="ordered locus">H16_A0804</name>
</gene>
<evidence type="ECO:0000255" key="1">
    <source>
        <dbReference type="HAMAP-Rule" id="MF_01601"/>
    </source>
</evidence>